<keyword id="KW-0051">Antiviral defense</keyword>
<keyword id="KW-0963">Cytoplasm</keyword>
<keyword id="KW-0391">Immunity</keyword>
<keyword id="KW-0399">Innate immunity</keyword>
<keyword id="KW-0496">Mitochondrion</keyword>
<keyword id="KW-0597">Phosphoprotein</keyword>
<keyword id="KW-1185">Reference proteome</keyword>
<keyword id="KW-0677">Repeat</keyword>
<keyword id="KW-0802">TPR repeat</keyword>
<comment type="function">
    <text evidence="1">IFN-induced antiviral protein which acts as an inhibitor of cellular as well as viral processes, cell migration, proliferation, signaling, and viral replication. Enhances MAVS-mediated host antiviral responses by serving as an adapter bridging TBK1 to MAVS which leads to the activation of TBK1 and phosphorylation of IRF3 and phosphorylated IRF3 translocates into nucleus to promote antiviral gene transcription. Exhibits an antiproliferative activity via the up-regulation of cell cycle negative regulators CDKN1A/p21 and CDKN1B/p27. Normally, CDKN1B/p27 turnover is regulated by COPS5, which binds CDKN1B/p27 in the nucleus and exports it to the cytoplasm for ubiquitin-dependent degradation. IFIT3 sequesters COPS5 in the cytoplasm, thereby increasing nuclear CDKN1B/p27 protein levels. Up-regulates CDKN1A/p21 by down-regulating MYC, a repressor of CDKN1A/p21. Can negatively regulate the apoptotic effects of IFIT2 (By similarity).</text>
</comment>
<comment type="subunit">
    <text evidence="2">Component of an interferon-dependent multiprotein complex, at least composed of IFIT1, IFIT2 and IFIT3 (By similarity). Interacts with IFIT1 and IFIT2 (By similarity). Interacts (via N-terminus) with MAVS, TBK1, TRAF6 and RIGI (By similarity). Interacts with COPS5 (By similarity).</text>
</comment>
<comment type="subcellular location">
    <subcellularLocation>
        <location evidence="2">Cytoplasm</location>
    </subcellularLocation>
    <subcellularLocation>
        <location evidence="2">Mitochondrion</location>
    </subcellularLocation>
</comment>
<comment type="similarity">
    <text evidence="4">Belongs to the IFIT family.</text>
</comment>
<protein>
    <recommendedName>
        <fullName>Interferon-induced protein with tetratricopeptide repeats 3</fullName>
        <shortName>IFIT-3</shortName>
    </recommendedName>
</protein>
<feature type="chain" id="PRO_0000295305" description="Interferon-induced protein with tetratricopeptide repeats 3">
    <location>
        <begin position="1"/>
        <end position="490"/>
    </location>
</feature>
<feature type="repeat" description="TPR 1">
    <location>
        <begin position="51"/>
        <end position="84"/>
    </location>
</feature>
<feature type="repeat" description="TPR 2">
    <location>
        <begin position="94"/>
        <end position="127"/>
    </location>
</feature>
<feature type="repeat" description="TPR 3">
    <location>
        <begin position="136"/>
        <end position="169"/>
    </location>
</feature>
<feature type="repeat" description="TPR 4">
    <location>
        <begin position="172"/>
        <end position="206"/>
    </location>
</feature>
<feature type="repeat" description="TPR 5">
    <location>
        <begin position="207"/>
        <end position="240"/>
    </location>
</feature>
<feature type="repeat" description="TPR 6">
    <location>
        <begin position="241"/>
        <end position="274"/>
    </location>
</feature>
<feature type="repeat" description="TPR 7">
    <location>
        <begin position="415"/>
        <end position="448"/>
    </location>
</feature>
<feature type="repeat" description="TPR 8">
    <location>
        <begin position="450"/>
        <end position="481"/>
    </location>
</feature>
<feature type="region of interest" description="Disordered" evidence="3">
    <location>
        <begin position="386"/>
        <end position="409"/>
    </location>
</feature>
<feature type="region of interest" description="Disordered" evidence="3">
    <location>
        <begin position="467"/>
        <end position="490"/>
    </location>
</feature>
<feature type="compositionally biased region" description="Basic and acidic residues" evidence="3">
    <location>
        <begin position="391"/>
        <end position="400"/>
    </location>
</feature>
<feature type="compositionally biased region" description="Polar residues" evidence="3">
    <location>
        <begin position="474"/>
        <end position="490"/>
    </location>
</feature>
<feature type="modified residue" description="Phosphoserine" evidence="2">
    <location>
        <position position="203"/>
    </location>
</feature>
<feature type="modified residue" description="Phosphoserine" evidence="2">
    <location>
        <position position="478"/>
    </location>
</feature>
<name>IFIT3_PANTR</name>
<gene>
    <name type="primary">IFIT3</name>
</gene>
<evidence type="ECO:0000250" key="1"/>
<evidence type="ECO:0000250" key="2">
    <source>
        <dbReference type="UniProtKB" id="O14879"/>
    </source>
</evidence>
<evidence type="ECO:0000256" key="3">
    <source>
        <dbReference type="SAM" id="MobiDB-lite"/>
    </source>
</evidence>
<evidence type="ECO:0000305" key="4"/>
<proteinExistence type="evidence at transcript level"/>
<organism>
    <name type="scientific">Pan troglodytes</name>
    <name type="common">Chimpanzee</name>
    <dbReference type="NCBI Taxonomy" id="9598"/>
    <lineage>
        <taxon>Eukaryota</taxon>
        <taxon>Metazoa</taxon>
        <taxon>Chordata</taxon>
        <taxon>Craniata</taxon>
        <taxon>Vertebrata</taxon>
        <taxon>Euteleostomi</taxon>
        <taxon>Mammalia</taxon>
        <taxon>Eutheria</taxon>
        <taxon>Euarchontoglires</taxon>
        <taxon>Primates</taxon>
        <taxon>Haplorrhini</taxon>
        <taxon>Catarrhini</taxon>
        <taxon>Hominidae</taxon>
        <taxon>Pan</taxon>
    </lineage>
</organism>
<dbReference type="EMBL" id="AB222127">
    <property type="protein sequence ID" value="BAF62372.1"/>
    <property type="molecule type" value="mRNA"/>
</dbReference>
<dbReference type="RefSeq" id="NP_001182075.1">
    <property type="nucleotide sequence ID" value="NM_001195146.1"/>
</dbReference>
<dbReference type="SMR" id="A5A6J9"/>
<dbReference type="FunCoup" id="A5A6J9">
    <property type="interactions" value="717"/>
</dbReference>
<dbReference type="STRING" id="9598.ENSPTRP00000088943"/>
<dbReference type="GeneID" id="738542"/>
<dbReference type="KEGG" id="ptr:738542"/>
<dbReference type="CTD" id="3437"/>
<dbReference type="InParanoid" id="A5A6J9"/>
<dbReference type="OrthoDB" id="6951at9604"/>
<dbReference type="Proteomes" id="UP000002277">
    <property type="component" value="Unplaced"/>
</dbReference>
<dbReference type="GO" id="GO:0005737">
    <property type="term" value="C:cytoplasm"/>
    <property type="evidence" value="ECO:0000250"/>
    <property type="project" value="UniProtKB"/>
</dbReference>
<dbReference type="GO" id="GO:0005829">
    <property type="term" value="C:cytosol"/>
    <property type="evidence" value="ECO:0000318"/>
    <property type="project" value="GO_Central"/>
</dbReference>
<dbReference type="GO" id="GO:0005739">
    <property type="term" value="C:mitochondrion"/>
    <property type="evidence" value="ECO:0000250"/>
    <property type="project" value="UniProtKB"/>
</dbReference>
<dbReference type="GO" id="GO:0051607">
    <property type="term" value="P:defense response to virus"/>
    <property type="evidence" value="ECO:0000318"/>
    <property type="project" value="GO_Central"/>
</dbReference>
<dbReference type="GO" id="GO:0045087">
    <property type="term" value="P:innate immune response"/>
    <property type="evidence" value="ECO:0007669"/>
    <property type="project" value="UniProtKB-KW"/>
</dbReference>
<dbReference type="GO" id="GO:0043066">
    <property type="term" value="P:negative regulation of apoptotic process"/>
    <property type="evidence" value="ECO:0000250"/>
    <property type="project" value="UniProtKB"/>
</dbReference>
<dbReference type="GO" id="GO:0008285">
    <property type="term" value="P:negative regulation of cell population proliferation"/>
    <property type="evidence" value="ECO:0000250"/>
    <property type="project" value="UniProtKB"/>
</dbReference>
<dbReference type="GO" id="GO:0009615">
    <property type="term" value="P:response to virus"/>
    <property type="evidence" value="ECO:0000250"/>
    <property type="project" value="UniProtKB"/>
</dbReference>
<dbReference type="FunFam" id="1.25.40.10:FF:000036">
    <property type="entry name" value="interferon-induced protein with tetratricopeptide repeats 5"/>
    <property type="match status" value="1"/>
</dbReference>
<dbReference type="Gene3D" id="1.25.40.10">
    <property type="entry name" value="Tetratricopeptide repeat domain"/>
    <property type="match status" value="3"/>
</dbReference>
<dbReference type="InterPro" id="IPR011990">
    <property type="entry name" value="TPR-like_helical_dom_sf"/>
</dbReference>
<dbReference type="InterPro" id="IPR019734">
    <property type="entry name" value="TPR_rpt"/>
</dbReference>
<dbReference type="PANTHER" id="PTHR10271">
    <property type="entry name" value="INTERFERON-INDUCED PROTEIN WITH TETRATRICOPEPTIDE REPEATS"/>
    <property type="match status" value="1"/>
</dbReference>
<dbReference type="PANTHER" id="PTHR10271:SF3">
    <property type="entry name" value="INTERFERON-INDUCED PROTEIN WITH TETRATRICOPEPTIDE REPEATS 3"/>
    <property type="match status" value="1"/>
</dbReference>
<dbReference type="Pfam" id="PF13176">
    <property type="entry name" value="TPR_7"/>
    <property type="match status" value="1"/>
</dbReference>
<dbReference type="Pfam" id="PF13181">
    <property type="entry name" value="TPR_8"/>
    <property type="match status" value="3"/>
</dbReference>
<dbReference type="SMART" id="SM00028">
    <property type="entry name" value="TPR"/>
    <property type="match status" value="4"/>
</dbReference>
<dbReference type="SUPFAM" id="SSF48452">
    <property type="entry name" value="TPR-like"/>
    <property type="match status" value="2"/>
</dbReference>
<dbReference type="PROSITE" id="PS50005">
    <property type="entry name" value="TPR"/>
    <property type="match status" value="4"/>
</dbReference>
<dbReference type="PROSITE" id="PS50293">
    <property type="entry name" value="TPR_REGION"/>
    <property type="match status" value="1"/>
</dbReference>
<reference key="1">
    <citation type="journal article" date="2007" name="Gene">
        <title>Mapping of chimpanzee full-length cDNAs onto the human genome unveils large potential divergence of the transcriptome.</title>
        <authorList>
            <person name="Sakate R."/>
            <person name="Suto Y."/>
            <person name="Imanishi T."/>
            <person name="Tanoue T."/>
            <person name="Hida M."/>
            <person name="Hayasaka I."/>
            <person name="Kusuda J."/>
            <person name="Gojobori T."/>
            <person name="Hashimoto K."/>
            <person name="Hirai M."/>
        </authorList>
    </citation>
    <scope>NUCLEOTIDE SEQUENCE [MRNA]</scope>
    <source>
        <tissue>Brain</tissue>
    </source>
</reference>
<sequence length="490" mass="55978">MSEVTKNSLEKILPQLKCHFTWNLFKEESVSRDLEDRVCNQIEFLNTEFKATMYNLLAYIKHLDGNNEAALECLRQAEELIQQEHADQAEIRSLVTWGNYVWVYYHLGRLSDAQIYVDKVKQTCKKFSNPYSIEYSELDCEEGWTQLKCGRNERAKVCFEKALEEKPNNPEFSSGLAIAMYHLDNNPEKQFSTDVLKQAIELSPDNQYVKVLLGLKLQKMNKEAEGEQFVEEALEKAPCQTDVLRSAAKFYRRKGDLDKAIELFQRVLESTPNNGYLYHQIGCCYKAKVRQMQNTGESEASGNKEMIEALKQYAMDYSNKALEKGLNPLNAYSDCAEFLETECYQTPFNKEVPDAEKQQSHQRYCNLQKYNGKSEDTAVQHGLEGLSISKKSTDKEEIKDQPQNVSENLLPQNAPNYWYLQGLIHKQNGDLLQAAKCYEKELGRLLRDAPSGIGSIFLSASELEDGSEEMGQGAVSSSPRELLSNSEQLN</sequence>
<accession>A5A6J9</accession>